<organism>
    <name type="scientific">Wolbachia pipientis subsp. Culex pipiens (strain wPip)</name>
    <dbReference type="NCBI Taxonomy" id="570417"/>
    <lineage>
        <taxon>Bacteria</taxon>
        <taxon>Pseudomonadati</taxon>
        <taxon>Pseudomonadota</taxon>
        <taxon>Alphaproteobacteria</taxon>
        <taxon>Rickettsiales</taxon>
        <taxon>Anaplasmataceae</taxon>
        <taxon>Wolbachieae</taxon>
        <taxon>Wolbachia</taxon>
    </lineage>
</organism>
<reference key="1">
    <citation type="journal article" date="2008" name="Mol. Biol. Evol.">
        <title>Genome evolution of Wolbachia strain wPip from the Culex pipiens group.</title>
        <authorList>
            <person name="Klasson L."/>
            <person name="Walker T."/>
            <person name="Sebaihia M."/>
            <person name="Sanders M.J."/>
            <person name="Quail M.A."/>
            <person name="Lord A."/>
            <person name="Sanders S."/>
            <person name="Earl J."/>
            <person name="O'Neill S.L."/>
            <person name="Thomson N."/>
            <person name="Sinkins S.P."/>
            <person name="Parkhill J."/>
        </authorList>
    </citation>
    <scope>NUCLEOTIDE SEQUENCE [LARGE SCALE GENOMIC DNA]</scope>
    <source>
        <strain>wPip</strain>
    </source>
</reference>
<keyword id="KW-1003">Cell membrane</keyword>
<keyword id="KW-0472">Membrane</keyword>
<keyword id="KW-0520">NAD</keyword>
<keyword id="KW-0874">Quinone</keyword>
<keyword id="KW-1278">Translocase</keyword>
<keyword id="KW-0813">Transport</keyword>
<keyword id="KW-0830">Ubiquinone</keyword>
<sequence length="390" mass="44493">MPDLKTMMLNFGPQHPAAHGVLRLVLEMDGEVIERADPHIGLLHRGTEKLIEHKTYLQALPYFDRLDYVSPMSQEHAYSLCVEKLLQCEIPIRAKYLRVLFCELTRILNHLLNISSQALDVGAMTPLLWLFEEREKILEFYERASGARFHAAYIRPGGLAADIPEGLIEDIAKFIEQFPKYIDDVDELLTENRIWKQRTVGISEISIKQALDWGFSGPMLRAAGLAWDLRKSQPYEIYDQLDFDIPIGQNGDCYDRYLVRMAEIRQSVSLVKQCIEKMPEGPIKTEDRKISPPPRAEMKESMEAMIHHFKLYSEGYHVPEGEAYVAVEAPKGEFGVYIVSDGTNRPYRCRIRAPGFAHLQALDFMAKGHMLADIAAIIGSLDIVFGEIDR</sequence>
<feature type="chain" id="PRO_0000357951" description="NADH-quinone oxidoreductase subunit D">
    <location>
        <begin position="1"/>
        <end position="390"/>
    </location>
</feature>
<protein>
    <recommendedName>
        <fullName evidence="1">NADH-quinone oxidoreductase subunit D</fullName>
        <ecNumber evidence="1">7.1.1.-</ecNumber>
    </recommendedName>
    <alternativeName>
        <fullName evidence="1">NADH dehydrogenase I subunit D</fullName>
    </alternativeName>
    <alternativeName>
        <fullName evidence="1">NDH-1 subunit D</fullName>
    </alternativeName>
</protein>
<evidence type="ECO:0000255" key="1">
    <source>
        <dbReference type="HAMAP-Rule" id="MF_01358"/>
    </source>
</evidence>
<comment type="function">
    <text evidence="1">NDH-1 shuttles electrons from NADH, via FMN and iron-sulfur (Fe-S) centers, to quinones in the respiratory chain. The immediate electron acceptor for the enzyme in this species is believed to be ubiquinone. Couples the redox reaction to proton translocation (for every two electrons transferred, four hydrogen ions are translocated across the cytoplasmic membrane), and thus conserves the redox energy in a proton gradient.</text>
</comment>
<comment type="catalytic activity">
    <reaction evidence="1">
        <text>a quinone + NADH + 5 H(+)(in) = a quinol + NAD(+) + 4 H(+)(out)</text>
        <dbReference type="Rhea" id="RHEA:57888"/>
        <dbReference type="ChEBI" id="CHEBI:15378"/>
        <dbReference type="ChEBI" id="CHEBI:24646"/>
        <dbReference type="ChEBI" id="CHEBI:57540"/>
        <dbReference type="ChEBI" id="CHEBI:57945"/>
        <dbReference type="ChEBI" id="CHEBI:132124"/>
    </reaction>
</comment>
<comment type="subunit">
    <text evidence="1">NDH-1 is composed of 14 different subunits. Subunits NuoB, C, D, E, F, and G constitute the peripheral sector of the complex.</text>
</comment>
<comment type="subcellular location">
    <subcellularLocation>
        <location evidence="1">Cell membrane</location>
        <topology evidence="1">Peripheral membrane protein</topology>
        <orientation evidence="1">Cytoplasmic side</orientation>
    </subcellularLocation>
</comment>
<comment type="similarity">
    <text evidence="1">Belongs to the complex I 49 kDa subunit family.</text>
</comment>
<accession>B3CLH1</accession>
<gene>
    <name evidence="1" type="primary">nuoD</name>
    <name type="ordered locus">WP0631</name>
</gene>
<name>NUOD_WOLPP</name>
<dbReference type="EC" id="7.1.1.-" evidence="1"/>
<dbReference type="EMBL" id="AM999887">
    <property type="protein sequence ID" value="CAQ54739.1"/>
    <property type="molecule type" value="Genomic_DNA"/>
</dbReference>
<dbReference type="RefSeq" id="WP_007302054.1">
    <property type="nucleotide sequence ID" value="NC_010981.1"/>
</dbReference>
<dbReference type="SMR" id="B3CLH1"/>
<dbReference type="KEGG" id="wpi:WP0631"/>
<dbReference type="eggNOG" id="COG0649">
    <property type="taxonomic scope" value="Bacteria"/>
</dbReference>
<dbReference type="HOGENOM" id="CLU_015134_1_1_5"/>
<dbReference type="Proteomes" id="UP000008814">
    <property type="component" value="Chromosome"/>
</dbReference>
<dbReference type="GO" id="GO:0005886">
    <property type="term" value="C:plasma membrane"/>
    <property type="evidence" value="ECO:0007669"/>
    <property type="project" value="UniProtKB-SubCell"/>
</dbReference>
<dbReference type="GO" id="GO:0051287">
    <property type="term" value="F:NAD binding"/>
    <property type="evidence" value="ECO:0007669"/>
    <property type="project" value="InterPro"/>
</dbReference>
<dbReference type="GO" id="GO:0050136">
    <property type="term" value="F:NADH:ubiquinone reductase (non-electrogenic) activity"/>
    <property type="evidence" value="ECO:0007669"/>
    <property type="project" value="UniProtKB-UniRule"/>
</dbReference>
<dbReference type="GO" id="GO:0048038">
    <property type="term" value="F:quinone binding"/>
    <property type="evidence" value="ECO:0007669"/>
    <property type="project" value="UniProtKB-KW"/>
</dbReference>
<dbReference type="FunFam" id="1.10.645.10:FF:000005">
    <property type="entry name" value="NADH-quinone oxidoreductase subunit D"/>
    <property type="match status" value="1"/>
</dbReference>
<dbReference type="Gene3D" id="1.10.645.10">
    <property type="entry name" value="Cytochrome-c3 Hydrogenase, chain B"/>
    <property type="match status" value="1"/>
</dbReference>
<dbReference type="HAMAP" id="MF_01358">
    <property type="entry name" value="NDH1_NuoD"/>
    <property type="match status" value="1"/>
</dbReference>
<dbReference type="InterPro" id="IPR001135">
    <property type="entry name" value="NADH_Q_OxRdtase_suD"/>
</dbReference>
<dbReference type="InterPro" id="IPR014029">
    <property type="entry name" value="NADH_UbQ_OxRdtase_49kDa_CS"/>
</dbReference>
<dbReference type="InterPro" id="IPR022885">
    <property type="entry name" value="NDH1_su_D/H"/>
</dbReference>
<dbReference type="InterPro" id="IPR029014">
    <property type="entry name" value="NiFe-Hase_large"/>
</dbReference>
<dbReference type="NCBIfam" id="TIGR01962">
    <property type="entry name" value="NuoD"/>
    <property type="match status" value="1"/>
</dbReference>
<dbReference type="NCBIfam" id="NF004739">
    <property type="entry name" value="PRK06075.1"/>
    <property type="match status" value="1"/>
</dbReference>
<dbReference type="PANTHER" id="PTHR11993:SF10">
    <property type="entry name" value="NADH DEHYDROGENASE [UBIQUINONE] IRON-SULFUR PROTEIN 2, MITOCHONDRIAL"/>
    <property type="match status" value="1"/>
</dbReference>
<dbReference type="PANTHER" id="PTHR11993">
    <property type="entry name" value="NADH-UBIQUINONE OXIDOREDUCTASE 49 KDA SUBUNIT"/>
    <property type="match status" value="1"/>
</dbReference>
<dbReference type="Pfam" id="PF00346">
    <property type="entry name" value="Complex1_49kDa"/>
    <property type="match status" value="1"/>
</dbReference>
<dbReference type="SUPFAM" id="SSF56762">
    <property type="entry name" value="HydB/Nqo4-like"/>
    <property type="match status" value="1"/>
</dbReference>
<dbReference type="PROSITE" id="PS00535">
    <property type="entry name" value="COMPLEX1_49K"/>
    <property type="match status" value="1"/>
</dbReference>
<proteinExistence type="inferred from homology"/>